<name>SYI_VIBPA</name>
<organism>
    <name type="scientific">Vibrio parahaemolyticus serotype O3:K6 (strain RIMD 2210633)</name>
    <dbReference type="NCBI Taxonomy" id="223926"/>
    <lineage>
        <taxon>Bacteria</taxon>
        <taxon>Pseudomonadati</taxon>
        <taxon>Pseudomonadota</taxon>
        <taxon>Gammaproteobacteria</taxon>
        <taxon>Vibrionales</taxon>
        <taxon>Vibrionaceae</taxon>
        <taxon>Vibrio</taxon>
    </lineage>
</organism>
<sequence>MSEYKDTLNLPETGFPMRGNLANREPEMLERWYKEDLYGEIRKAKKGKKSFVLHDGPPYANGDIHIGHALNKILKDIIIKSKTLSGFDAPYIPGWDCHGLPIELMVEKKVGKPGQKVTAAEFREKCREYAAGQVEGQKESFKRLGIMGEWDKPYRTMDFATEANIIRALGKIASNGHLLKGFKPVHWCTDCGSALAEAEVEYKDKVSPSIDVRFKTADEAALLSKFELTEGHEGKGDVSIVIWTTTPWTLPANRAVCLRDDLEYVLIQVEGDNPERIIVAAELAKDVMDRAGIEHFHNLGFAKGADLELSQFQHPFYDFTVPAILGDHVTTDSGTGVVHTAPGHGQEDFAVGQKYNLEVANPVGSNGVYLPDTELFAGQHVFKANDAVVETLKEKGALLHHHAYEHSYPHCWRHKTPIIFRATPQWFVSMDQAGLRAKALESIKGVQWMPEWGQSRIEGMIEGRPEWCISRQRTWGVPIALFVHKETAELHPNTLELIEKVAKLVEEKGIQAWWDVDAAELLGDEAEQYEKVLDTLDVWFDSGVTHFSVVDAREEYNGNSADLYLEGSDQHRGWFQSSLISSIAMKGVAPYKQVLTHGFVVDGHGRKMSKSIGNVVAPKDVTNKLGADILRLWVASTDYTGEVAVSDEILKRSADAYRRIRNTARFFLANLNGFNPATDIVPAEEMVALDRWAVGRALAAQEEIIKAYDEYNIHAVTQRLMQFCSIEMGSFYLDVIKDRQYTAKQGGHAQRSCQTALYYIVEALVRWMAPIMSFTADEIWNEMPGEREKFVFTGEWFDGLFGLAEGEELNNEFWTEIQKVRGAVNKLLEAARAEKTIGGALQAELTLFADDALAAKINKLEDELRFVLLTSAAAVKPLSEKSDAAQATDIEGLFVEVKATEAEKCDRCWHHTPDVGTIAGHEKICGRCVSNVDGKGEVRKFA</sequence>
<evidence type="ECO:0000255" key="1">
    <source>
        <dbReference type="HAMAP-Rule" id="MF_02002"/>
    </source>
</evidence>
<dbReference type="EC" id="6.1.1.5" evidence="1"/>
<dbReference type="EMBL" id="BA000031">
    <property type="protein sequence ID" value="BAC58797.1"/>
    <property type="molecule type" value="Genomic_DNA"/>
</dbReference>
<dbReference type="RefSeq" id="NP_796913.1">
    <property type="nucleotide sequence ID" value="NC_004603.1"/>
</dbReference>
<dbReference type="RefSeq" id="WP_005488695.1">
    <property type="nucleotide sequence ID" value="NC_004603.1"/>
</dbReference>
<dbReference type="SMR" id="Q87S90"/>
<dbReference type="GeneID" id="1188002"/>
<dbReference type="KEGG" id="vpa:VP0534"/>
<dbReference type="PATRIC" id="fig|223926.6.peg.507"/>
<dbReference type="eggNOG" id="COG0060">
    <property type="taxonomic scope" value="Bacteria"/>
</dbReference>
<dbReference type="HOGENOM" id="CLU_001493_7_0_6"/>
<dbReference type="Proteomes" id="UP000002493">
    <property type="component" value="Chromosome 1"/>
</dbReference>
<dbReference type="GO" id="GO:0005829">
    <property type="term" value="C:cytosol"/>
    <property type="evidence" value="ECO:0007669"/>
    <property type="project" value="TreeGrafter"/>
</dbReference>
<dbReference type="GO" id="GO:0002161">
    <property type="term" value="F:aminoacyl-tRNA deacylase activity"/>
    <property type="evidence" value="ECO:0007669"/>
    <property type="project" value="InterPro"/>
</dbReference>
<dbReference type="GO" id="GO:0005524">
    <property type="term" value="F:ATP binding"/>
    <property type="evidence" value="ECO:0007669"/>
    <property type="project" value="UniProtKB-UniRule"/>
</dbReference>
<dbReference type="GO" id="GO:0004822">
    <property type="term" value="F:isoleucine-tRNA ligase activity"/>
    <property type="evidence" value="ECO:0007669"/>
    <property type="project" value="UniProtKB-UniRule"/>
</dbReference>
<dbReference type="GO" id="GO:0000049">
    <property type="term" value="F:tRNA binding"/>
    <property type="evidence" value="ECO:0007669"/>
    <property type="project" value="InterPro"/>
</dbReference>
<dbReference type="GO" id="GO:0008270">
    <property type="term" value="F:zinc ion binding"/>
    <property type="evidence" value="ECO:0007669"/>
    <property type="project" value="UniProtKB-UniRule"/>
</dbReference>
<dbReference type="GO" id="GO:0006428">
    <property type="term" value="P:isoleucyl-tRNA aminoacylation"/>
    <property type="evidence" value="ECO:0007669"/>
    <property type="project" value="UniProtKB-UniRule"/>
</dbReference>
<dbReference type="CDD" id="cd07960">
    <property type="entry name" value="Anticodon_Ia_Ile_BEm"/>
    <property type="match status" value="1"/>
</dbReference>
<dbReference type="CDD" id="cd00818">
    <property type="entry name" value="IleRS_core"/>
    <property type="match status" value="1"/>
</dbReference>
<dbReference type="FunFam" id="1.10.730.20:FF:000001">
    <property type="entry name" value="Isoleucine--tRNA ligase"/>
    <property type="match status" value="1"/>
</dbReference>
<dbReference type="FunFam" id="3.40.50.620:FF:000048">
    <property type="entry name" value="Isoleucine--tRNA ligase"/>
    <property type="match status" value="1"/>
</dbReference>
<dbReference type="FunFam" id="3.40.50.620:FF:000168">
    <property type="entry name" value="Isoleucine--tRNA ligase"/>
    <property type="match status" value="1"/>
</dbReference>
<dbReference type="Gene3D" id="1.10.730.20">
    <property type="match status" value="1"/>
</dbReference>
<dbReference type="Gene3D" id="3.40.50.620">
    <property type="entry name" value="HUPs"/>
    <property type="match status" value="2"/>
</dbReference>
<dbReference type="Gene3D" id="1.10.10.830">
    <property type="entry name" value="Ile-tRNA synthetase CP2 domain-like"/>
    <property type="match status" value="1"/>
</dbReference>
<dbReference type="HAMAP" id="MF_02002">
    <property type="entry name" value="Ile_tRNA_synth_type1"/>
    <property type="match status" value="1"/>
</dbReference>
<dbReference type="InterPro" id="IPR001412">
    <property type="entry name" value="aa-tRNA-synth_I_CS"/>
</dbReference>
<dbReference type="InterPro" id="IPR002300">
    <property type="entry name" value="aa-tRNA-synth_Ia"/>
</dbReference>
<dbReference type="InterPro" id="IPR033708">
    <property type="entry name" value="Anticodon_Ile_BEm"/>
</dbReference>
<dbReference type="InterPro" id="IPR002301">
    <property type="entry name" value="Ile-tRNA-ligase"/>
</dbReference>
<dbReference type="InterPro" id="IPR023585">
    <property type="entry name" value="Ile-tRNA-ligase_type1"/>
</dbReference>
<dbReference type="InterPro" id="IPR050081">
    <property type="entry name" value="Ile-tRNA_ligase"/>
</dbReference>
<dbReference type="InterPro" id="IPR013155">
    <property type="entry name" value="M/V/L/I-tRNA-synth_anticd-bd"/>
</dbReference>
<dbReference type="InterPro" id="IPR014729">
    <property type="entry name" value="Rossmann-like_a/b/a_fold"/>
</dbReference>
<dbReference type="InterPro" id="IPR009080">
    <property type="entry name" value="tRNAsynth_Ia_anticodon-bd"/>
</dbReference>
<dbReference type="InterPro" id="IPR009008">
    <property type="entry name" value="Val/Leu/Ile-tRNA-synth_edit"/>
</dbReference>
<dbReference type="InterPro" id="IPR010663">
    <property type="entry name" value="Znf_FPG/IleRS"/>
</dbReference>
<dbReference type="NCBIfam" id="TIGR00392">
    <property type="entry name" value="ileS"/>
    <property type="match status" value="1"/>
</dbReference>
<dbReference type="PANTHER" id="PTHR42765:SF1">
    <property type="entry name" value="ISOLEUCINE--TRNA LIGASE, MITOCHONDRIAL"/>
    <property type="match status" value="1"/>
</dbReference>
<dbReference type="PANTHER" id="PTHR42765">
    <property type="entry name" value="SOLEUCYL-TRNA SYNTHETASE"/>
    <property type="match status" value="1"/>
</dbReference>
<dbReference type="Pfam" id="PF08264">
    <property type="entry name" value="Anticodon_1"/>
    <property type="match status" value="1"/>
</dbReference>
<dbReference type="Pfam" id="PF00133">
    <property type="entry name" value="tRNA-synt_1"/>
    <property type="match status" value="1"/>
</dbReference>
<dbReference type="Pfam" id="PF06827">
    <property type="entry name" value="zf-FPG_IleRS"/>
    <property type="match status" value="1"/>
</dbReference>
<dbReference type="PRINTS" id="PR00984">
    <property type="entry name" value="TRNASYNTHILE"/>
</dbReference>
<dbReference type="SUPFAM" id="SSF47323">
    <property type="entry name" value="Anticodon-binding domain of a subclass of class I aminoacyl-tRNA synthetases"/>
    <property type="match status" value="1"/>
</dbReference>
<dbReference type="SUPFAM" id="SSF52374">
    <property type="entry name" value="Nucleotidylyl transferase"/>
    <property type="match status" value="1"/>
</dbReference>
<dbReference type="SUPFAM" id="SSF50677">
    <property type="entry name" value="ValRS/IleRS/LeuRS editing domain"/>
    <property type="match status" value="1"/>
</dbReference>
<dbReference type="PROSITE" id="PS00178">
    <property type="entry name" value="AA_TRNA_LIGASE_I"/>
    <property type="match status" value="1"/>
</dbReference>
<reference key="1">
    <citation type="journal article" date="2003" name="Lancet">
        <title>Genome sequence of Vibrio parahaemolyticus: a pathogenic mechanism distinct from that of V. cholerae.</title>
        <authorList>
            <person name="Makino K."/>
            <person name="Oshima K."/>
            <person name="Kurokawa K."/>
            <person name="Yokoyama K."/>
            <person name="Uda T."/>
            <person name="Tagomori K."/>
            <person name="Iijima Y."/>
            <person name="Najima M."/>
            <person name="Nakano M."/>
            <person name="Yamashita A."/>
            <person name="Kubota Y."/>
            <person name="Kimura S."/>
            <person name="Yasunaga T."/>
            <person name="Honda T."/>
            <person name="Shinagawa H."/>
            <person name="Hattori M."/>
            <person name="Iida T."/>
        </authorList>
    </citation>
    <scope>NUCLEOTIDE SEQUENCE [LARGE SCALE GENOMIC DNA]</scope>
    <source>
        <strain>RIMD 2210633</strain>
    </source>
</reference>
<comment type="function">
    <text evidence="1">Catalyzes the attachment of isoleucine to tRNA(Ile). As IleRS can inadvertently accommodate and process structurally similar amino acids such as valine, to avoid such errors it has two additional distinct tRNA(Ile)-dependent editing activities. One activity is designated as 'pretransfer' editing and involves the hydrolysis of activated Val-AMP. The other activity is designated 'posttransfer' editing and involves deacylation of mischarged Val-tRNA(Ile).</text>
</comment>
<comment type="catalytic activity">
    <reaction evidence="1">
        <text>tRNA(Ile) + L-isoleucine + ATP = L-isoleucyl-tRNA(Ile) + AMP + diphosphate</text>
        <dbReference type="Rhea" id="RHEA:11060"/>
        <dbReference type="Rhea" id="RHEA-COMP:9666"/>
        <dbReference type="Rhea" id="RHEA-COMP:9695"/>
        <dbReference type="ChEBI" id="CHEBI:30616"/>
        <dbReference type="ChEBI" id="CHEBI:33019"/>
        <dbReference type="ChEBI" id="CHEBI:58045"/>
        <dbReference type="ChEBI" id="CHEBI:78442"/>
        <dbReference type="ChEBI" id="CHEBI:78528"/>
        <dbReference type="ChEBI" id="CHEBI:456215"/>
        <dbReference type="EC" id="6.1.1.5"/>
    </reaction>
</comment>
<comment type="cofactor">
    <cofactor evidence="1">
        <name>Zn(2+)</name>
        <dbReference type="ChEBI" id="CHEBI:29105"/>
    </cofactor>
    <text evidence="1">Binds 1 zinc ion per subunit.</text>
</comment>
<comment type="subunit">
    <text evidence="1">Monomer.</text>
</comment>
<comment type="subcellular location">
    <subcellularLocation>
        <location evidence="1">Cytoplasm</location>
    </subcellularLocation>
</comment>
<comment type="domain">
    <text evidence="1">IleRS has two distinct active sites: one for aminoacylation and one for editing. The misactivated valine is translocated from the active site to the editing site, which sterically excludes the correctly activated isoleucine. The single editing site contains two valyl binding pockets, one specific for each substrate (Val-AMP or Val-tRNA(Ile)).</text>
</comment>
<comment type="similarity">
    <text evidence="1">Belongs to the class-I aminoacyl-tRNA synthetase family. IleS type 1 subfamily.</text>
</comment>
<feature type="chain" id="PRO_0000098499" description="Isoleucine--tRNA ligase">
    <location>
        <begin position="1"/>
        <end position="942"/>
    </location>
</feature>
<feature type="short sequence motif" description="'HIGH' region">
    <location>
        <begin position="58"/>
        <end position="68"/>
    </location>
</feature>
<feature type="short sequence motif" description="'KMSKS' region">
    <location>
        <begin position="607"/>
        <end position="611"/>
    </location>
</feature>
<feature type="binding site" evidence="1">
    <location>
        <position position="566"/>
    </location>
    <ligand>
        <name>L-isoleucyl-5'-AMP</name>
        <dbReference type="ChEBI" id="CHEBI:178002"/>
    </ligand>
</feature>
<feature type="binding site" evidence="1">
    <location>
        <position position="610"/>
    </location>
    <ligand>
        <name>ATP</name>
        <dbReference type="ChEBI" id="CHEBI:30616"/>
    </ligand>
</feature>
<feature type="binding site" evidence="1">
    <location>
        <position position="905"/>
    </location>
    <ligand>
        <name>Zn(2+)</name>
        <dbReference type="ChEBI" id="CHEBI:29105"/>
    </ligand>
</feature>
<feature type="binding site" evidence="1">
    <location>
        <position position="908"/>
    </location>
    <ligand>
        <name>Zn(2+)</name>
        <dbReference type="ChEBI" id="CHEBI:29105"/>
    </ligand>
</feature>
<feature type="binding site" evidence="1">
    <location>
        <position position="925"/>
    </location>
    <ligand>
        <name>Zn(2+)</name>
        <dbReference type="ChEBI" id="CHEBI:29105"/>
    </ligand>
</feature>
<feature type="binding site" evidence="1">
    <location>
        <position position="928"/>
    </location>
    <ligand>
        <name>Zn(2+)</name>
        <dbReference type="ChEBI" id="CHEBI:29105"/>
    </ligand>
</feature>
<gene>
    <name evidence="1" type="primary">ileS</name>
    <name type="ordered locus">VP0534</name>
</gene>
<accession>Q87S90</accession>
<keyword id="KW-0030">Aminoacyl-tRNA synthetase</keyword>
<keyword id="KW-0067">ATP-binding</keyword>
<keyword id="KW-0963">Cytoplasm</keyword>
<keyword id="KW-0436">Ligase</keyword>
<keyword id="KW-0479">Metal-binding</keyword>
<keyword id="KW-0547">Nucleotide-binding</keyword>
<keyword id="KW-0648">Protein biosynthesis</keyword>
<keyword id="KW-0862">Zinc</keyword>
<proteinExistence type="inferred from homology"/>
<protein>
    <recommendedName>
        <fullName evidence="1">Isoleucine--tRNA ligase</fullName>
        <ecNumber evidence="1">6.1.1.5</ecNumber>
    </recommendedName>
    <alternativeName>
        <fullName evidence="1">Isoleucyl-tRNA synthetase</fullName>
        <shortName evidence="1">IleRS</shortName>
    </alternativeName>
</protein>